<organism>
    <name type="scientific">Bacillus cereus (strain ATCC 14579 / DSM 31 / CCUG 7414 / JCM 2152 / NBRC 15305 / NCIMB 9373 / NCTC 2599 / NRRL B-3711)</name>
    <dbReference type="NCBI Taxonomy" id="226900"/>
    <lineage>
        <taxon>Bacteria</taxon>
        <taxon>Bacillati</taxon>
        <taxon>Bacillota</taxon>
        <taxon>Bacilli</taxon>
        <taxon>Bacillales</taxon>
        <taxon>Bacillaceae</taxon>
        <taxon>Bacillus</taxon>
        <taxon>Bacillus cereus group</taxon>
    </lineage>
</organism>
<sequence length="61" mass="7296">MAKKSMIAKQKRTPKFKVQEYTRCERCGRPHSVYRKFKLCRICFRELAYKGQIPGVKKASW</sequence>
<feature type="chain" id="PRO_0000269079" description="Small ribosomal subunit protein uS14">
    <location>
        <begin position="1"/>
        <end position="61"/>
    </location>
</feature>
<feature type="binding site" evidence="1">
    <location>
        <position position="24"/>
    </location>
    <ligand>
        <name>Zn(2+)</name>
        <dbReference type="ChEBI" id="CHEBI:29105"/>
    </ligand>
</feature>
<feature type="binding site" evidence="1">
    <location>
        <position position="27"/>
    </location>
    <ligand>
        <name>Zn(2+)</name>
        <dbReference type="ChEBI" id="CHEBI:29105"/>
    </ligand>
</feature>
<feature type="binding site" evidence="1">
    <location>
        <position position="40"/>
    </location>
    <ligand>
        <name>Zn(2+)</name>
        <dbReference type="ChEBI" id="CHEBI:29105"/>
    </ligand>
</feature>
<feature type="binding site" evidence="1">
    <location>
        <position position="43"/>
    </location>
    <ligand>
        <name>Zn(2+)</name>
        <dbReference type="ChEBI" id="CHEBI:29105"/>
    </ligand>
</feature>
<reference key="1">
    <citation type="journal article" date="2003" name="Nature">
        <title>Genome sequence of Bacillus cereus and comparative analysis with Bacillus anthracis.</title>
        <authorList>
            <person name="Ivanova N."/>
            <person name="Sorokin A."/>
            <person name="Anderson I."/>
            <person name="Galleron N."/>
            <person name="Candelon B."/>
            <person name="Kapatral V."/>
            <person name="Bhattacharyya A."/>
            <person name="Reznik G."/>
            <person name="Mikhailova N."/>
            <person name="Lapidus A."/>
            <person name="Chu L."/>
            <person name="Mazur M."/>
            <person name="Goltsman E."/>
            <person name="Larsen N."/>
            <person name="D'Souza M."/>
            <person name="Walunas T."/>
            <person name="Grechkin Y."/>
            <person name="Pusch G."/>
            <person name="Haselkorn R."/>
            <person name="Fonstein M."/>
            <person name="Ehrlich S.D."/>
            <person name="Overbeek R."/>
            <person name="Kyrpides N.C."/>
        </authorList>
    </citation>
    <scope>NUCLEOTIDE SEQUENCE [LARGE SCALE GENOMIC DNA]</scope>
    <source>
        <strain>ATCC 14579 / DSM 31 / CCUG 7414 / JCM 2152 / NBRC 15305 / NCIMB 9373 / NCTC 2599 / NRRL B-3711</strain>
    </source>
</reference>
<accession>Q81J29</accession>
<evidence type="ECO:0000255" key="1">
    <source>
        <dbReference type="HAMAP-Rule" id="MF_01364"/>
    </source>
</evidence>
<evidence type="ECO:0000305" key="2"/>
<name>RS14Z_BACCR</name>
<proteinExistence type="inferred from homology"/>
<gene>
    <name evidence="1" type="primary">rpsZ</name>
    <name evidence="1" type="synonym">rpsN</name>
    <name type="ordered locus">BC_0144</name>
</gene>
<protein>
    <recommendedName>
        <fullName evidence="1">Small ribosomal subunit protein uS14</fullName>
    </recommendedName>
    <alternativeName>
        <fullName evidence="2">30S ribosomal protein S14 type Z</fullName>
    </alternativeName>
</protein>
<dbReference type="EMBL" id="AE016877">
    <property type="protein sequence ID" value="AAP07225.1"/>
    <property type="molecule type" value="Genomic_DNA"/>
</dbReference>
<dbReference type="RefSeq" id="NP_830024.1">
    <property type="nucleotide sequence ID" value="NC_004722.1"/>
</dbReference>
<dbReference type="RefSeq" id="WP_001085700.1">
    <property type="nucleotide sequence ID" value="NZ_CP138336.1"/>
</dbReference>
<dbReference type="SMR" id="Q81J29"/>
<dbReference type="STRING" id="226900.BC_0144"/>
<dbReference type="GeneID" id="93010930"/>
<dbReference type="KEGG" id="bce:BC0144"/>
<dbReference type="PATRIC" id="fig|226900.8.peg.145"/>
<dbReference type="HOGENOM" id="CLU_139869_3_0_9"/>
<dbReference type="OrthoDB" id="9810484at2"/>
<dbReference type="PRO" id="PR:Q81J29"/>
<dbReference type="Proteomes" id="UP000001417">
    <property type="component" value="Chromosome"/>
</dbReference>
<dbReference type="GO" id="GO:0015935">
    <property type="term" value="C:small ribosomal subunit"/>
    <property type="evidence" value="ECO:0000318"/>
    <property type="project" value="GO_Central"/>
</dbReference>
<dbReference type="GO" id="GO:0019843">
    <property type="term" value="F:rRNA binding"/>
    <property type="evidence" value="ECO:0007669"/>
    <property type="project" value="UniProtKB-UniRule"/>
</dbReference>
<dbReference type="GO" id="GO:0003735">
    <property type="term" value="F:structural constituent of ribosome"/>
    <property type="evidence" value="ECO:0000318"/>
    <property type="project" value="GO_Central"/>
</dbReference>
<dbReference type="GO" id="GO:0008270">
    <property type="term" value="F:zinc ion binding"/>
    <property type="evidence" value="ECO:0007669"/>
    <property type="project" value="UniProtKB-UniRule"/>
</dbReference>
<dbReference type="GO" id="GO:0006412">
    <property type="term" value="P:translation"/>
    <property type="evidence" value="ECO:0000318"/>
    <property type="project" value="GO_Central"/>
</dbReference>
<dbReference type="FunFam" id="4.10.830.10:FF:000001">
    <property type="entry name" value="30S ribosomal protein S14 type Z"/>
    <property type="match status" value="1"/>
</dbReference>
<dbReference type="Gene3D" id="4.10.830.10">
    <property type="entry name" value="30s Ribosomal Protein S14, Chain N"/>
    <property type="match status" value="1"/>
</dbReference>
<dbReference type="HAMAP" id="MF_01364_B">
    <property type="entry name" value="Ribosomal_uS14_2_B"/>
    <property type="match status" value="1"/>
</dbReference>
<dbReference type="InterPro" id="IPR001209">
    <property type="entry name" value="Ribosomal_uS14"/>
</dbReference>
<dbReference type="InterPro" id="IPR023053">
    <property type="entry name" value="Ribosomal_uS14_bact"/>
</dbReference>
<dbReference type="InterPro" id="IPR018271">
    <property type="entry name" value="Ribosomal_uS14_CS"/>
</dbReference>
<dbReference type="InterPro" id="IPR043140">
    <property type="entry name" value="Ribosomal_uS14_sf"/>
</dbReference>
<dbReference type="NCBIfam" id="NF005974">
    <property type="entry name" value="PRK08061.1"/>
    <property type="match status" value="1"/>
</dbReference>
<dbReference type="PANTHER" id="PTHR19836">
    <property type="entry name" value="30S RIBOSOMAL PROTEIN S14"/>
    <property type="match status" value="1"/>
</dbReference>
<dbReference type="PANTHER" id="PTHR19836:SF26">
    <property type="entry name" value="SMALL RIBOSOMAL SUBUNIT PROTEIN US14B"/>
    <property type="match status" value="1"/>
</dbReference>
<dbReference type="Pfam" id="PF00253">
    <property type="entry name" value="Ribosomal_S14"/>
    <property type="match status" value="1"/>
</dbReference>
<dbReference type="SUPFAM" id="SSF57716">
    <property type="entry name" value="Glucocorticoid receptor-like (DNA-binding domain)"/>
    <property type="match status" value="1"/>
</dbReference>
<dbReference type="PROSITE" id="PS00527">
    <property type="entry name" value="RIBOSOMAL_S14"/>
    <property type="match status" value="1"/>
</dbReference>
<comment type="function">
    <text evidence="1">Binds 16S rRNA, required for the assembly of 30S particles and may also be responsible for determining the conformation of the 16S rRNA at the A site.</text>
</comment>
<comment type="cofactor">
    <cofactor evidence="1">
        <name>Zn(2+)</name>
        <dbReference type="ChEBI" id="CHEBI:29105"/>
    </cofactor>
    <text evidence="1">Binds 1 zinc ion per subunit.</text>
</comment>
<comment type="subunit">
    <text evidence="1">Part of the 30S ribosomal subunit. Contacts proteins S3 and S10.</text>
</comment>
<comment type="similarity">
    <text evidence="1">Belongs to the universal ribosomal protein uS14 family. Zinc-binding uS14 subfamily.</text>
</comment>
<keyword id="KW-0479">Metal-binding</keyword>
<keyword id="KW-1185">Reference proteome</keyword>
<keyword id="KW-0687">Ribonucleoprotein</keyword>
<keyword id="KW-0689">Ribosomal protein</keyword>
<keyword id="KW-0694">RNA-binding</keyword>
<keyword id="KW-0699">rRNA-binding</keyword>
<keyword id="KW-0862">Zinc</keyword>